<name>RS10_RHOPB</name>
<organism>
    <name type="scientific">Rhodopseudomonas palustris (strain BisB18)</name>
    <dbReference type="NCBI Taxonomy" id="316056"/>
    <lineage>
        <taxon>Bacteria</taxon>
        <taxon>Pseudomonadati</taxon>
        <taxon>Pseudomonadota</taxon>
        <taxon>Alphaproteobacteria</taxon>
        <taxon>Hyphomicrobiales</taxon>
        <taxon>Nitrobacteraceae</taxon>
        <taxon>Rhodopseudomonas</taxon>
    </lineage>
</organism>
<feature type="chain" id="PRO_0000258567" description="Small ribosomal subunit protein uS10">
    <location>
        <begin position="1"/>
        <end position="102"/>
    </location>
</feature>
<gene>
    <name evidence="1" type="primary">rpsJ</name>
    <name type="ordered locus">RPC_3449</name>
</gene>
<reference key="1">
    <citation type="submission" date="2006-03" db="EMBL/GenBank/DDBJ databases">
        <title>Complete sequence of Rhodopseudomonas palustris BisB18.</title>
        <authorList>
            <consortium name="US DOE Joint Genome Institute"/>
            <person name="Copeland A."/>
            <person name="Lucas S."/>
            <person name="Lapidus A."/>
            <person name="Barry K."/>
            <person name="Detter J.C."/>
            <person name="Glavina del Rio T."/>
            <person name="Hammon N."/>
            <person name="Israni S."/>
            <person name="Dalin E."/>
            <person name="Tice H."/>
            <person name="Pitluck S."/>
            <person name="Chain P."/>
            <person name="Malfatti S."/>
            <person name="Shin M."/>
            <person name="Vergez L."/>
            <person name="Schmutz J."/>
            <person name="Larimer F."/>
            <person name="Land M."/>
            <person name="Hauser L."/>
            <person name="Pelletier D.A."/>
            <person name="Kyrpides N."/>
            <person name="Anderson I."/>
            <person name="Oda Y."/>
            <person name="Harwood C.S."/>
            <person name="Richardson P."/>
        </authorList>
    </citation>
    <scope>NUCLEOTIDE SEQUENCE [LARGE SCALE GENOMIC DNA]</scope>
    <source>
        <strain>BisB18</strain>
    </source>
</reference>
<keyword id="KW-0687">Ribonucleoprotein</keyword>
<keyword id="KW-0689">Ribosomal protein</keyword>
<dbReference type="EMBL" id="CP000301">
    <property type="protein sequence ID" value="ABD88989.1"/>
    <property type="molecule type" value="Genomic_DNA"/>
</dbReference>
<dbReference type="SMR" id="Q211E7"/>
<dbReference type="STRING" id="316056.RPC_3449"/>
<dbReference type="KEGG" id="rpc:RPC_3449"/>
<dbReference type="eggNOG" id="COG0051">
    <property type="taxonomic scope" value="Bacteria"/>
</dbReference>
<dbReference type="HOGENOM" id="CLU_122625_1_3_5"/>
<dbReference type="OrthoDB" id="9804464at2"/>
<dbReference type="GO" id="GO:1990904">
    <property type="term" value="C:ribonucleoprotein complex"/>
    <property type="evidence" value="ECO:0007669"/>
    <property type="project" value="UniProtKB-KW"/>
</dbReference>
<dbReference type="GO" id="GO:0005840">
    <property type="term" value="C:ribosome"/>
    <property type="evidence" value="ECO:0007669"/>
    <property type="project" value="UniProtKB-KW"/>
</dbReference>
<dbReference type="GO" id="GO:0003735">
    <property type="term" value="F:structural constituent of ribosome"/>
    <property type="evidence" value="ECO:0007669"/>
    <property type="project" value="InterPro"/>
</dbReference>
<dbReference type="GO" id="GO:0000049">
    <property type="term" value="F:tRNA binding"/>
    <property type="evidence" value="ECO:0007669"/>
    <property type="project" value="UniProtKB-UniRule"/>
</dbReference>
<dbReference type="GO" id="GO:0006412">
    <property type="term" value="P:translation"/>
    <property type="evidence" value="ECO:0007669"/>
    <property type="project" value="UniProtKB-UniRule"/>
</dbReference>
<dbReference type="FunFam" id="3.30.70.600:FF:000001">
    <property type="entry name" value="30S ribosomal protein S10"/>
    <property type="match status" value="1"/>
</dbReference>
<dbReference type="Gene3D" id="3.30.70.600">
    <property type="entry name" value="Ribosomal protein S10 domain"/>
    <property type="match status" value="1"/>
</dbReference>
<dbReference type="HAMAP" id="MF_00508">
    <property type="entry name" value="Ribosomal_uS10"/>
    <property type="match status" value="1"/>
</dbReference>
<dbReference type="InterPro" id="IPR001848">
    <property type="entry name" value="Ribosomal_uS10"/>
</dbReference>
<dbReference type="InterPro" id="IPR018268">
    <property type="entry name" value="Ribosomal_uS10_CS"/>
</dbReference>
<dbReference type="InterPro" id="IPR027486">
    <property type="entry name" value="Ribosomal_uS10_dom"/>
</dbReference>
<dbReference type="InterPro" id="IPR036838">
    <property type="entry name" value="Ribosomal_uS10_dom_sf"/>
</dbReference>
<dbReference type="NCBIfam" id="NF001861">
    <property type="entry name" value="PRK00596.1"/>
    <property type="match status" value="1"/>
</dbReference>
<dbReference type="NCBIfam" id="TIGR01049">
    <property type="entry name" value="rpsJ_bact"/>
    <property type="match status" value="1"/>
</dbReference>
<dbReference type="PANTHER" id="PTHR11700">
    <property type="entry name" value="30S RIBOSOMAL PROTEIN S10 FAMILY MEMBER"/>
    <property type="match status" value="1"/>
</dbReference>
<dbReference type="Pfam" id="PF00338">
    <property type="entry name" value="Ribosomal_S10"/>
    <property type="match status" value="1"/>
</dbReference>
<dbReference type="PRINTS" id="PR00971">
    <property type="entry name" value="RIBOSOMALS10"/>
</dbReference>
<dbReference type="SMART" id="SM01403">
    <property type="entry name" value="Ribosomal_S10"/>
    <property type="match status" value="1"/>
</dbReference>
<dbReference type="SUPFAM" id="SSF54999">
    <property type="entry name" value="Ribosomal protein S10"/>
    <property type="match status" value="1"/>
</dbReference>
<dbReference type="PROSITE" id="PS00361">
    <property type="entry name" value="RIBOSOMAL_S10"/>
    <property type="match status" value="1"/>
</dbReference>
<sequence>MNGQNIRIRLKAFDHRILDSSTREIVNTAKRTGAQVRGPIPLPTRIEKFTVNRSPHVDKKSREQFEMRTHKRLLDIVDPTPQTVDALMKLDLAAGVDVEIKL</sequence>
<evidence type="ECO:0000255" key="1">
    <source>
        <dbReference type="HAMAP-Rule" id="MF_00508"/>
    </source>
</evidence>
<evidence type="ECO:0000305" key="2"/>
<comment type="function">
    <text evidence="1">Involved in the binding of tRNA to the ribosomes.</text>
</comment>
<comment type="subunit">
    <text evidence="1">Part of the 30S ribosomal subunit.</text>
</comment>
<comment type="similarity">
    <text evidence="1">Belongs to the universal ribosomal protein uS10 family.</text>
</comment>
<accession>Q211E7</accession>
<protein>
    <recommendedName>
        <fullName evidence="1">Small ribosomal subunit protein uS10</fullName>
    </recommendedName>
    <alternativeName>
        <fullName evidence="2">30S ribosomal protein S10</fullName>
    </alternativeName>
</protein>
<proteinExistence type="inferred from homology"/>